<reference key="1">
    <citation type="journal article" date="1997" name="Mol. Gen. Genet.">
        <title>A large open reading frame (orf1995) in the chloroplast DNA of Chlamydomonas reinhardtii encodes an essential protein.</title>
        <authorList>
            <person name="Boudreau E."/>
            <person name="Turmel M."/>
            <person name="Goldschmidt-Clermont M."/>
            <person name="Rochaix J.-D."/>
            <person name="Sivan S."/>
            <person name="Michaels A."/>
            <person name="Leu S."/>
        </authorList>
    </citation>
    <scope>NUCLEOTIDE SEQUENCE [GENOMIC DNA]</scope>
</reference>
<reference key="2">
    <citation type="journal article" date="2009" name="BMC Evol. Biol.">
        <title>Nucleotide diversity of the Chlamydomonas reinhardtii plastid genome: addressing the mutational-hazard hypothesis.</title>
        <authorList>
            <person name="Smith D.R."/>
            <person name="Lee R.W."/>
        </authorList>
    </citation>
    <scope>NUCLEOTIDE SEQUENCE [LARGE SCALE GENOMIC DNA]</scope>
    <source>
        <strain>CC-503</strain>
    </source>
</reference>
<reference key="3">
    <citation type="submission" date="1993-12" db="EMBL/GenBank/DDBJ databases">
        <authorList>
            <person name="Sivan S."/>
            <person name="Michaels A."/>
        </authorList>
    </citation>
    <scope>NUCLEOTIDE SEQUENCE [GENOMIC DNA] OF 1573-1995</scope>
    <source>
        <strain>cw15</strain>
    </source>
</reference>
<reference key="4">
    <citation type="journal article" date="1986" name="Gene">
        <title>The sequence of the chloroplast atpB gene and its flanking regions in Chlamydomonas reinhardtii.</title>
        <authorList>
            <person name="Woessner J.P."/>
            <person name="Gillham N.W."/>
            <person name="Boynton J.E."/>
        </authorList>
    </citation>
    <scope>NUCLEOTIDE SEQUENCE [GENOMIC DNA] OF 1897-1995</scope>
</reference>
<reference key="5">
    <citation type="journal article" date="1994" name="Plant Mol. Biol.">
        <title>Conserved gene clusters in the highly rearranged chloroplast genomes of Chlamydomonas moewusii and Chlamydomonas reinhardtii.</title>
        <authorList>
            <person name="Boudreau E."/>
            <person name="Otis C."/>
            <person name="Turmel M."/>
        </authorList>
    </citation>
    <scope>PARTIAL NUCLEOTIDE SEQUENCE</scope>
</reference>
<reference key="6">
    <citation type="journal article" date="2002" name="Plant Cell">
        <title>The Chlamydomonas reinhardtii plastid chromosome: islands of genes in a sea of repeats.</title>
        <authorList>
            <person name="Maul J.E."/>
            <person name="Lilly J.W."/>
            <person name="Cui L."/>
            <person name="dePamphilis C.W."/>
            <person name="Miller W."/>
            <person name="Harris E.H."/>
            <person name="Stern D.B."/>
        </authorList>
    </citation>
    <scope>IDENTIFICATION</scope>
    <scope>COMPLETE PLASTID GENOME</scope>
</reference>
<feature type="chain" id="PRO_0000217502" description="Uncharacterized membrane protein ycf78">
    <location>
        <begin position="1"/>
        <end position="1995"/>
    </location>
</feature>
<feature type="transmembrane region" description="Helical" evidence="1">
    <location>
        <begin position="31"/>
        <end position="51"/>
    </location>
</feature>
<feature type="transmembrane region" description="Helical" evidence="1">
    <location>
        <begin position="53"/>
        <end position="73"/>
    </location>
</feature>
<feature type="transmembrane region" description="Helical" evidence="1">
    <location>
        <begin position="106"/>
        <end position="126"/>
    </location>
</feature>
<feature type="transmembrane region" description="Helical" evidence="1">
    <location>
        <begin position="157"/>
        <end position="177"/>
    </location>
</feature>
<feature type="transmembrane region" description="Helical" evidence="1">
    <location>
        <begin position="212"/>
        <end position="232"/>
    </location>
</feature>
<feature type="transmembrane region" description="Helical" evidence="1">
    <location>
        <begin position="254"/>
        <end position="274"/>
    </location>
</feature>
<feature type="transmembrane region" description="Helical" evidence="1">
    <location>
        <begin position="307"/>
        <end position="327"/>
    </location>
</feature>
<feature type="region of interest" description="Disordered" evidence="2">
    <location>
        <begin position="1418"/>
        <end position="1441"/>
    </location>
</feature>
<feature type="region of interest" description="Disordered" evidence="2">
    <location>
        <begin position="1848"/>
        <end position="1883"/>
    </location>
</feature>
<feature type="compositionally biased region" description="Basic residues" evidence="2">
    <location>
        <begin position="1422"/>
        <end position="1441"/>
    </location>
</feature>
<feature type="compositionally biased region" description="Basic residues" evidence="2">
    <location>
        <begin position="1853"/>
        <end position="1863"/>
    </location>
</feature>
<feature type="sequence variant" description="In strain: CC-503.">
    <original>L</original>
    <variation>V</variation>
    <location>
        <position position="580"/>
    </location>
</feature>
<feature type="sequence variant" description="In strain: CC-503 and cw15.">
    <original>K</original>
    <variation>R</variation>
    <location>
        <position position="1588"/>
    </location>
</feature>
<feature type="sequence variant" description="In strain: CC-503.">
    <original>P</original>
    <variation>A</variation>
    <location>
        <position position="1610"/>
    </location>
</feature>
<feature type="sequence variant" description="In strain: CC-503.">
    <original>P</original>
    <variation>A</variation>
    <location>
        <position position="1618"/>
    </location>
</feature>
<feature type="helix" evidence="4">
    <location>
        <begin position="9"/>
        <end position="22"/>
    </location>
</feature>
<feature type="turn" evidence="4">
    <location>
        <begin position="23"/>
        <end position="26"/>
    </location>
</feature>
<feature type="helix" evidence="4">
    <location>
        <begin position="35"/>
        <end position="54"/>
    </location>
</feature>
<feature type="turn" evidence="4">
    <location>
        <begin position="55"/>
        <end position="59"/>
    </location>
</feature>
<feature type="strand" evidence="4">
    <location>
        <begin position="64"/>
        <end position="66"/>
    </location>
</feature>
<feature type="helix" evidence="4">
    <location>
        <begin position="72"/>
        <end position="74"/>
    </location>
</feature>
<feature type="helix" evidence="4">
    <location>
        <begin position="77"/>
        <end position="79"/>
    </location>
</feature>
<feature type="strand" evidence="4">
    <location>
        <begin position="82"/>
        <end position="86"/>
    </location>
</feature>
<feature type="strand" evidence="5">
    <location>
        <begin position="87"/>
        <end position="89"/>
    </location>
</feature>
<feature type="strand" evidence="4">
    <location>
        <begin position="92"/>
        <end position="94"/>
    </location>
</feature>
<feature type="helix" evidence="4">
    <location>
        <begin position="106"/>
        <end position="122"/>
    </location>
</feature>
<feature type="helix" evidence="4">
    <location>
        <begin position="128"/>
        <end position="139"/>
    </location>
</feature>
<feature type="helix" evidence="4">
    <location>
        <begin position="142"/>
        <end position="165"/>
    </location>
</feature>
<feature type="helix" evidence="4">
    <location>
        <begin position="168"/>
        <end position="176"/>
    </location>
</feature>
<feature type="helix" evidence="4">
    <location>
        <begin position="178"/>
        <end position="196"/>
    </location>
</feature>
<feature type="turn" evidence="4">
    <location>
        <begin position="197"/>
        <end position="199"/>
    </location>
</feature>
<feature type="helix" evidence="4">
    <location>
        <begin position="206"/>
        <end position="220"/>
    </location>
</feature>
<feature type="strand" evidence="4">
    <location>
        <begin position="226"/>
        <end position="228"/>
    </location>
</feature>
<feature type="helix" evidence="4">
    <location>
        <begin position="229"/>
        <end position="232"/>
    </location>
</feature>
<feature type="strand" evidence="4">
    <location>
        <begin position="236"/>
        <end position="242"/>
    </location>
</feature>
<feature type="helix" evidence="4">
    <location>
        <begin position="251"/>
        <end position="281"/>
    </location>
</feature>
<feature type="helix" evidence="4">
    <location>
        <begin position="283"/>
        <end position="292"/>
    </location>
</feature>
<feature type="turn" evidence="4">
    <location>
        <begin position="301"/>
        <end position="303"/>
    </location>
</feature>
<feature type="helix" evidence="4">
    <location>
        <begin position="304"/>
        <end position="321"/>
    </location>
</feature>
<feature type="turn" evidence="4">
    <location>
        <begin position="322"/>
        <end position="326"/>
    </location>
</feature>
<feature type="helix" evidence="4">
    <location>
        <begin position="329"/>
        <end position="337"/>
    </location>
</feature>
<feature type="helix" evidence="4">
    <location>
        <begin position="344"/>
        <end position="346"/>
    </location>
</feature>
<feature type="strand" evidence="4">
    <location>
        <begin position="349"/>
        <end position="351"/>
    </location>
</feature>
<feature type="strand" evidence="4">
    <location>
        <begin position="356"/>
        <end position="358"/>
    </location>
</feature>
<feature type="helix" evidence="4">
    <location>
        <begin position="360"/>
        <end position="362"/>
    </location>
</feature>
<feature type="helix" evidence="4">
    <location>
        <begin position="374"/>
        <end position="376"/>
    </location>
</feature>
<feature type="helix" evidence="4">
    <location>
        <begin position="386"/>
        <end position="388"/>
    </location>
</feature>
<feature type="turn" evidence="5">
    <location>
        <begin position="390"/>
        <end position="393"/>
    </location>
</feature>
<feature type="strand" evidence="4">
    <location>
        <begin position="408"/>
        <end position="410"/>
    </location>
</feature>
<feature type="helix" evidence="4">
    <location>
        <begin position="412"/>
        <end position="416"/>
    </location>
</feature>
<feature type="helix" evidence="4">
    <location>
        <begin position="418"/>
        <end position="424"/>
    </location>
</feature>
<feature type="helix" evidence="4">
    <location>
        <begin position="425"/>
        <end position="429"/>
    </location>
</feature>
<feature type="strand" evidence="5">
    <location>
        <begin position="436"/>
        <end position="438"/>
    </location>
</feature>
<feature type="helix" evidence="5">
    <location>
        <begin position="440"/>
        <end position="449"/>
    </location>
</feature>
<feature type="turn" evidence="4">
    <location>
        <begin position="468"/>
        <end position="470"/>
    </location>
</feature>
<feature type="helix" evidence="4">
    <location>
        <begin position="471"/>
        <end position="479"/>
    </location>
</feature>
<feature type="helix" evidence="4">
    <location>
        <begin position="483"/>
        <end position="486"/>
    </location>
</feature>
<feature type="helix" evidence="4">
    <location>
        <begin position="540"/>
        <end position="543"/>
    </location>
</feature>
<feature type="strand" evidence="5">
    <location>
        <begin position="546"/>
        <end position="548"/>
    </location>
</feature>
<feature type="helix" evidence="4">
    <location>
        <begin position="560"/>
        <end position="583"/>
    </location>
</feature>
<feature type="helix" evidence="5">
    <location>
        <begin position="586"/>
        <end position="588"/>
    </location>
</feature>
<feature type="strand" evidence="4">
    <location>
        <begin position="599"/>
        <end position="601"/>
    </location>
</feature>
<feature type="helix" evidence="4">
    <location>
        <begin position="602"/>
        <end position="610"/>
    </location>
</feature>
<feature type="strand" evidence="4">
    <location>
        <begin position="614"/>
        <end position="616"/>
    </location>
</feature>
<feature type="helix" evidence="4">
    <location>
        <begin position="617"/>
        <end position="633"/>
    </location>
</feature>
<feature type="helix" evidence="4">
    <location>
        <begin position="642"/>
        <end position="645"/>
    </location>
</feature>
<feature type="strand" evidence="4">
    <location>
        <begin position="646"/>
        <end position="648"/>
    </location>
</feature>
<feature type="helix" evidence="4">
    <location>
        <begin position="653"/>
        <end position="667"/>
    </location>
</feature>
<feature type="helix" evidence="4">
    <location>
        <begin position="681"/>
        <end position="697"/>
    </location>
</feature>
<feature type="helix" evidence="4">
    <location>
        <begin position="698"/>
        <end position="700"/>
    </location>
</feature>
<feature type="helix" evidence="4">
    <location>
        <begin position="714"/>
        <end position="723"/>
    </location>
</feature>
<feature type="helix" evidence="4">
    <location>
        <begin position="732"/>
        <end position="738"/>
    </location>
</feature>
<feature type="strand" evidence="4">
    <location>
        <begin position="744"/>
        <end position="746"/>
    </location>
</feature>
<feature type="strand" evidence="4">
    <location>
        <begin position="755"/>
        <end position="758"/>
    </location>
</feature>
<feature type="helix" evidence="5">
    <location>
        <begin position="808"/>
        <end position="810"/>
    </location>
</feature>
<feature type="helix" evidence="4">
    <location>
        <begin position="815"/>
        <end position="833"/>
    </location>
</feature>
<feature type="helix" evidence="4">
    <location>
        <begin position="836"/>
        <end position="838"/>
    </location>
</feature>
<feature type="helix" evidence="4">
    <location>
        <begin position="840"/>
        <end position="849"/>
    </location>
</feature>
<feature type="helix" evidence="4">
    <location>
        <begin position="850"/>
        <end position="852"/>
    </location>
</feature>
<feature type="helix" evidence="4">
    <location>
        <begin position="855"/>
        <end position="857"/>
    </location>
</feature>
<feature type="helix" evidence="4">
    <location>
        <begin position="861"/>
        <end position="879"/>
    </location>
</feature>
<feature type="helix" evidence="4">
    <location>
        <begin position="883"/>
        <end position="886"/>
    </location>
</feature>
<feature type="helix" evidence="4">
    <location>
        <begin position="892"/>
        <end position="896"/>
    </location>
</feature>
<feature type="helix" evidence="4">
    <location>
        <begin position="903"/>
        <end position="905"/>
    </location>
</feature>
<feature type="strand" evidence="4">
    <location>
        <begin position="913"/>
        <end position="915"/>
    </location>
</feature>
<feature type="helix" evidence="4">
    <location>
        <begin position="916"/>
        <end position="919"/>
    </location>
</feature>
<feature type="turn" evidence="4">
    <location>
        <begin position="920"/>
        <end position="922"/>
    </location>
</feature>
<feature type="strand" evidence="4">
    <location>
        <begin position="929"/>
        <end position="931"/>
    </location>
</feature>
<feature type="strand" evidence="4">
    <location>
        <begin position="951"/>
        <end position="953"/>
    </location>
</feature>
<feature type="helix" evidence="4">
    <location>
        <begin position="955"/>
        <end position="958"/>
    </location>
</feature>
<feature type="helix" evidence="4">
    <location>
        <begin position="968"/>
        <end position="980"/>
    </location>
</feature>
<feature type="helix" evidence="4">
    <location>
        <begin position="1047"/>
        <end position="1062"/>
    </location>
</feature>
<feature type="helix" evidence="4">
    <location>
        <begin position="1066"/>
        <end position="1103"/>
    </location>
</feature>
<feature type="helix" evidence="4">
    <location>
        <begin position="1131"/>
        <end position="1142"/>
    </location>
</feature>
<feature type="strand" evidence="4">
    <location>
        <begin position="1144"/>
        <end position="1147"/>
    </location>
</feature>
<feature type="helix" evidence="4">
    <location>
        <begin position="1156"/>
        <end position="1180"/>
    </location>
</feature>
<feature type="helix" evidence="4">
    <location>
        <begin position="1232"/>
        <end position="1244"/>
    </location>
</feature>
<feature type="turn" evidence="4">
    <location>
        <begin position="1245"/>
        <end position="1248"/>
    </location>
</feature>
<feature type="helix" evidence="4">
    <location>
        <begin position="1252"/>
        <end position="1261"/>
    </location>
</feature>
<feature type="strand" evidence="6">
    <location>
        <begin position="1262"/>
        <end position="1264"/>
    </location>
</feature>
<feature type="helix" evidence="5">
    <location>
        <begin position="1272"/>
        <end position="1276"/>
    </location>
</feature>
<feature type="strand" evidence="5">
    <location>
        <begin position="1281"/>
        <end position="1283"/>
    </location>
</feature>
<feature type="strand" evidence="4">
    <location>
        <begin position="1348"/>
        <end position="1352"/>
    </location>
</feature>
<feature type="strand" evidence="5">
    <location>
        <begin position="1357"/>
        <end position="1359"/>
    </location>
</feature>
<feature type="strand" evidence="5">
    <location>
        <begin position="1378"/>
        <end position="1381"/>
    </location>
</feature>
<feature type="strand" evidence="4">
    <location>
        <begin position="1383"/>
        <end position="1389"/>
    </location>
</feature>
<feature type="strand" evidence="4">
    <location>
        <begin position="1391"/>
        <end position="1393"/>
    </location>
</feature>
<feature type="helix" evidence="4">
    <location>
        <begin position="1398"/>
        <end position="1411"/>
    </location>
</feature>
<feature type="turn" evidence="4">
    <location>
        <begin position="1412"/>
        <end position="1414"/>
    </location>
</feature>
<feature type="strand" evidence="5">
    <location>
        <begin position="1415"/>
        <end position="1418"/>
    </location>
</feature>
<feature type="turn" evidence="5">
    <location>
        <begin position="1427"/>
        <end position="1430"/>
    </location>
</feature>
<feature type="helix" evidence="4">
    <location>
        <begin position="1431"/>
        <end position="1435"/>
    </location>
</feature>
<feature type="strand" evidence="4">
    <location>
        <begin position="1436"/>
        <end position="1438"/>
    </location>
</feature>
<feature type="helix" evidence="4">
    <location>
        <begin position="1439"/>
        <end position="1447"/>
    </location>
</feature>
<feature type="helix" evidence="4">
    <location>
        <begin position="1454"/>
        <end position="1489"/>
    </location>
</feature>
<feature type="helix" evidence="5">
    <location>
        <begin position="1500"/>
        <end position="1503"/>
    </location>
</feature>
<feature type="helix" evidence="5">
    <location>
        <begin position="1547"/>
        <end position="1558"/>
    </location>
</feature>
<feature type="strand" evidence="5">
    <location>
        <begin position="1564"/>
        <end position="1566"/>
    </location>
</feature>
<feature type="strand" evidence="4">
    <location>
        <begin position="1580"/>
        <end position="1583"/>
    </location>
</feature>
<feature type="strand" evidence="4">
    <location>
        <begin position="1585"/>
        <end position="1587"/>
    </location>
</feature>
<feature type="strand" evidence="4">
    <location>
        <begin position="1589"/>
        <end position="1593"/>
    </location>
</feature>
<feature type="turn" evidence="4">
    <location>
        <begin position="1599"/>
        <end position="1604"/>
    </location>
</feature>
<feature type="strand" evidence="4">
    <location>
        <begin position="1608"/>
        <end position="1611"/>
    </location>
</feature>
<feature type="strand" evidence="4">
    <location>
        <begin position="1616"/>
        <end position="1619"/>
    </location>
</feature>
<feature type="helix" evidence="4">
    <location>
        <begin position="1625"/>
        <end position="1630"/>
    </location>
</feature>
<feature type="turn" evidence="4">
    <location>
        <begin position="1631"/>
        <end position="1633"/>
    </location>
</feature>
<feature type="strand" evidence="5">
    <location>
        <begin position="1636"/>
        <end position="1639"/>
    </location>
</feature>
<feature type="helix" evidence="4">
    <location>
        <begin position="1640"/>
        <end position="1643"/>
    </location>
</feature>
<feature type="helix" evidence="4">
    <location>
        <begin position="1647"/>
        <end position="1653"/>
    </location>
</feature>
<feature type="turn" evidence="4">
    <location>
        <begin position="1664"/>
        <end position="1666"/>
    </location>
</feature>
<feature type="helix" evidence="4">
    <location>
        <begin position="1691"/>
        <end position="1693"/>
    </location>
</feature>
<feature type="helix" evidence="4">
    <location>
        <begin position="1699"/>
        <end position="1718"/>
    </location>
</feature>
<feature type="helix" evidence="4">
    <location>
        <begin position="1721"/>
        <end position="1724"/>
    </location>
</feature>
<feature type="turn" evidence="4">
    <location>
        <begin position="1725"/>
        <end position="1730"/>
    </location>
</feature>
<feature type="strand" evidence="4">
    <location>
        <begin position="1742"/>
        <end position="1744"/>
    </location>
</feature>
<feature type="helix" evidence="4">
    <location>
        <begin position="1746"/>
        <end position="1752"/>
    </location>
</feature>
<feature type="helix" evidence="4">
    <location>
        <begin position="1759"/>
        <end position="1761"/>
    </location>
</feature>
<feature type="helix" evidence="4">
    <location>
        <begin position="1774"/>
        <end position="1786"/>
    </location>
</feature>
<feature type="turn" evidence="4">
    <location>
        <begin position="1787"/>
        <end position="1789"/>
    </location>
</feature>
<feature type="helix" evidence="4">
    <location>
        <begin position="1804"/>
        <end position="1806"/>
    </location>
</feature>
<feature type="strand" evidence="4">
    <location>
        <begin position="1922"/>
        <end position="1924"/>
    </location>
</feature>
<feature type="helix" evidence="4">
    <location>
        <begin position="1956"/>
        <end position="1970"/>
    </location>
</feature>
<feature type="helix" evidence="4">
    <location>
        <begin position="1974"/>
        <end position="1976"/>
    </location>
</feature>
<feature type="helix" evidence="4">
    <location>
        <begin position="1977"/>
        <end position="1988"/>
    </location>
</feature>
<geneLocation type="chloroplast"/>
<comment type="function">
    <text>Essential for cell growth. May be involved in binding chloroplast DNA to either the chloroplast envelope or the thylakoid membrane.</text>
</comment>
<comment type="subcellular location">
    <subcellularLocation>
        <location evidence="3">Plastid</location>
        <location evidence="3">Chloroplast membrane</location>
        <topology evidence="3">Multi-pass membrane protein</topology>
    </subcellularLocation>
</comment>
<comment type="similarity">
    <text evidence="3">Belongs to the ycf78 family.</text>
</comment>
<comment type="sequence caution" evidence="3">
    <conflict type="erroneous initiation">
        <sequence resource="EMBL-CDS" id="AAA84144"/>
    </conflict>
</comment>
<sequence>MITFTFMSLVTSVKDYVEITHKLIEIEPLKNYTEFGAVFTYFIFSIGEFFKNFFSFSFLNNIWSIPIIIPDIASAMISEVSVLDGYFHNAFTFLETSVNTTTNPSLVIFEKFVIGIINSLFLILPTSTSHLITLRRFVMQGLEAGYMAGLGTLAGNFLWLASIILGWRFFVIPWLSLDIFRYLLGFVLLVKYIWDSSKERRMALEDLSKWKIFLLNFLLALTEQSCIYPFISNLSFGPDASILEGFPVDNYPQFLLIHGAYLLGILFGSFSLLQFTCWFWENPAFSIYLWITTKSSLKISTSSYYKILNFTFLYATMLCAIASIPYYGLDYTITNPIGLVPQDRILNQKKSQSDPDKLITETAFLNLNPTDKNSRIRDGVHARRERWKQRLIKYQAFDASTYDQGVYDFLTIEDLNYGFDRFWLRRKMRNHQIRFRLFPGPWMRSLKKQLNNPANPSLETSTKAASGPRVEFFRILFEQFYHPNFHDRAAMQTNPAEARNKFISTSPLASTESKKALNSTFSLGNINNSSTGIEGLVLTNTQATLLPTDLQTKRTIKPGLIYTNSALRKFVRNVNTRLNLKLLNSKETNLTTKYKSQFIYSKRWKSIFSKIQPLQNGTTRKSYQLFRNVAKQILVTPDAKSLKLITINQKLSLKERKLLELRTQYNNNSTLTTTAPLTLVRPLNVYLQKEEAFKRKLRYYGTMPMRKLTVGNQAPYFKALMKRGFYYYKPTLRWRKTLYVASLRRGFRKKSRKQRILVMPSNQQNFNNTLDNTKTNINQNNLANPLGGNEVPMYGADGENSLITKPTHSYTVLGKRASRYRHQIYKDVLQHWYYTPFNRLLMKFDVDAFINRQPKSHFLTKNEERALHIRRFLLSEHYDTLRWYTYMQHYKTMKTNIGGTKSFANRAYNQQFQGTFKKIRHLFAITPKQGDFYTLKFDQPLYNDNKLKDNLYFHEELLTDYYNGTNLQTNQTSNISVNSTTTFIDNSLRTTQLPVPSSSFDIVNQSSTLIGLTTMQNALRKNVVESTLTSLNSDGEAATSQPKLNFVYSELFVKLIKECKKRIHDQTFLKNYITHRIEKREQLNQEQTKELNKRLEKLKVWLNSDKGSISKLQNTPVQDPNISSPDKVLTTAMQKAVNESISLSGIMPSDKIKTTYGNLTNAYTIKTENAILTKLNVINQLTNNETTTQKNTLIKSIGVNKIQTVLQTIITNFKSSLYNQTQLLRVKTDKDLQWWRTKQRVITKRKSARKRDRFKKQIAVVNKKLAALSKKVETEKSNLYQTLYGNYEISDYLLRNVPTGSSAVIDSTVLRKKQDNQAYLPKETNNVQFNSFVDSNNNVWQTFFAKKLRKKISSKGRRYRSLSLARYLTATRKPRLVGLDNLTKIDNITTLQGAFITKEEKQDSLNLTIQRKQELTNSLKKSQIKKRSRHSWKKRSRHQFSRNHYKYRKRHTHGNGKLRVMNKKLKKFKATNELRQWWWNSFLPRYLSNLQVNNSTLTNKNVSFKPLSNTNSVPSTNMASPTTSRNLLDNLNSSNQISTSASMNQNIVTESVKVETNQVYLPEGEKSFDITSMTTTLPFYAGWDESLKKFVVTNRLLSRRDAGLSVNNNPQEINFTNPPIQGLNEGSFLYWQTEMPFNSYNIDQFITTNQSFYAPLGWRRFEFRHSILKTWVNNTKAGNNNIKKKTLIISLKNLQPLKSSQQKQNQIKTKKLVARRIKKRYKLLKQMPNQLMYSPTGPLLTEVLPSHYISVFDQQYRLPRNRYLKRNPLKTLKKTTLLALMDSSKQTNGVNKEFTLRKRVKPRRKYHRKRFIKKDGLIFPRRTKFNTNTTLTGNALITNNVNSIEEDDLRWRPSSRTKQKRKDNTRSSAASKTKSNKRVKTNPLRLRQLRRREFQQVLKPLQRYIPQNGGFTWPGDYLRLEIVEMPKLKSINIKKTSLKQKINVQPVGIMPRKYLIEKHNIKVLKKKLSQAYSTQQLTKVVQEYKNLIQNSPPAI</sequence>
<name>YCF78_CHLRE</name>
<evidence type="ECO:0000255" key="1"/>
<evidence type="ECO:0000256" key="2">
    <source>
        <dbReference type="SAM" id="MobiDB-lite"/>
    </source>
</evidence>
<evidence type="ECO:0000305" key="3"/>
<evidence type="ECO:0007829" key="4">
    <source>
        <dbReference type="PDB" id="7VCF"/>
    </source>
</evidence>
<evidence type="ECO:0007829" key="5">
    <source>
        <dbReference type="PDB" id="7XZI"/>
    </source>
</evidence>
<evidence type="ECO:0007829" key="6">
    <source>
        <dbReference type="PDB" id="7XZJ"/>
    </source>
</evidence>
<organism>
    <name type="scientific">Chlamydomonas reinhardtii</name>
    <name type="common">Chlamydomonas smithii</name>
    <dbReference type="NCBI Taxonomy" id="3055"/>
    <lineage>
        <taxon>Eukaryota</taxon>
        <taxon>Viridiplantae</taxon>
        <taxon>Chlorophyta</taxon>
        <taxon>core chlorophytes</taxon>
        <taxon>Chlorophyceae</taxon>
        <taxon>CS clade</taxon>
        <taxon>Chlamydomonadales</taxon>
        <taxon>Chlamydomonadaceae</taxon>
        <taxon>Chlamydomonas</taxon>
    </lineage>
</organism>
<dbReference type="EMBL" id="X92726">
    <property type="protein sequence ID" value="CAA63385.1"/>
    <property type="molecule type" value="Genomic_DNA"/>
</dbReference>
<dbReference type="EMBL" id="M13704">
    <property type="protein sequence ID" value="AAA84144.1"/>
    <property type="status" value="ALT_INIT"/>
    <property type="molecule type" value="Genomic_DNA"/>
</dbReference>
<dbReference type="EMBL" id="FJ423446">
    <property type="protein sequence ID" value="ACJ50146.1"/>
    <property type="molecule type" value="Genomic_DNA"/>
</dbReference>
<dbReference type="EMBL" id="X76934">
    <property type="protein sequence ID" value="CAA54257.1"/>
    <property type="molecule type" value="Genomic_DNA"/>
</dbReference>
<dbReference type="EMBL" id="BK000554">
    <property type="protein sequence ID" value="DAA00959.1"/>
    <property type="molecule type" value="Genomic_DNA"/>
</dbReference>
<dbReference type="PIR" id="S41289">
    <property type="entry name" value="S41289"/>
</dbReference>
<dbReference type="PIR" id="T08166">
    <property type="entry name" value="T08166"/>
</dbReference>
<dbReference type="PDB" id="7VCF">
    <property type="method" value="EM"/>
    <property type="resolution" value="2.50 A"/>
    <property type="chains" value="A=1-1995"/>
</dbReference>
<dbReference type="PDB" id="7XZI">
    <property type="method" value="EM"/>
    <property type="resolution" value="2.77 A"/>
    <property type="chains" value="A=1-1995"/>
</dbReference>
<dbReference type="PDB" id="7XZJ">
    <property type="method" value="EM"/>
    <property type="resolution" value="2.97 A"/>
    <property type="chains" value="A=1-1995"/>
</dbReference>
<dbReference type="PDBsum" id="7VCF"/>
<dbReference type="PDBsum" id="7XZI"/>
<dbReference type="PDBsum" id="7XZJ"/>
<dbReference type="EMDB" id="EMD-31890"/>
<dbReference type="EMDB" id="EMD-33528"/>
<dbReference type="EMDB" id="EMD-33529"/>
<dbReference type="SMR" id="P36495"/>
<dbReference type="STRING" id="3055.P36495"/>
<dbReference type="PaxDb" id="3055-DAA00959"/>
<dbReference type="KEGG" id="cre:ChreCp059"/>
<dbReference type="HOGENOM" id="CLU_234019_0_0_1"/>
<dbReference type="InParanoid" id="P36495"/>
<dbReference type="Proteomes" id="UP000006906">
    <property type="component" value="Chloroplast"/>
</dbReference>
<dbReference type="GO" id="GO:0031969">
    <property type="term" value="C:chloroplast membrane"/>
    <property type="evidence" value="ECO:0007669"/>
    <property type="project" value="UniProtKB-SubCell"/>
</dbReference>
<protein>
    <recommendedName>
        <fullName>Uncharacterized membrane protein ycf78</fullName>
    </recommendedName>
    <alternativeName>
        <fullName>ORF-S</fullName>
    </alternativeName>
    <alternativeName>
        <fullName>ORF1995</fullName>
    </alternativeName>
    <alternativeName>
        <fullName>ORFA</fullName>
    </alternativeName>
</protein>
<gene>
    <name type="primary">ycf78</name>
</gene>
<proteinExistence type="evidence at protein level"/>
<accession>P36495</accession>
<accession>B7U1J9</accession>
<accession>Q37303</accession>
<keyword id="KW-0002">3D-structure</keyword>
<keyword id="KW-0150">Chloroplast</keyword>
<keyword id="KW-0472">Membrane</keyword>
<keyword id="KW-0934">Plastid</keyword>
<keyword id="KW-1185">Reference proteome</keyword>
<keyword id="KW-0812">Transmembrane</keyword>
<keyword id="KW-1133">Transmembrane helix</keyword>